<protein>
    <recommendedName>
        <fullName evidence="1">Large ribosomal subunit protein bL28</fullName>
    </recommendedName>
    <alternativeName>
        <fullName evidence="2">50S ribosomal protein L28</fullName>
    </alternativeName>
</protein>
<proteinExistence type="inferred from homology"/>
<reference key="1">
    <citation type="journal article" date="2009" name="PLoS Genet.">
        <title>Organised genome dynamics in the Escherichia coli species results in highly diverse adaptive paths.</title>
        <authorList>
            <person name="Touchon M."/>
            <person name="Hoede C."/>
            <person name="Tenaillon O."/>
            <person name="Barbe V."/>
            <person name="Baeriswyl S."/>
            <person name="Bidet P."/>
            <person name="Bingen E."/>
            <person name="Bonacorsi S."/>
            <person name="Bouchier C."/>
            <person name="Bouvet O."/>
            <person name="Calteau A."/>
            <person name="Chiapello H."/>
            <person name="Clermont O."/>
            <person name="Cruveiller S."/>
            <person name="Danchin A."/>
            <person name="Diard M."/>
            <person name="Dossat C."/>
            <person name="Karoui M.E."/>
            <person name="Frapy E."/>
            <person name="Garry L."/>
            <person name="Ghigo J.M."/>
            <person name="Gilles A.M."/>
            <person name="Johnson J."/>
            <person name="Le Bouguenec C."/>
            <person name="Lescat M."/>
            <person name="Mangenot S."/>
            <person name="Martinez-Jehanne V."/>
            <person name="Matic I."/>
            <person name="Nassif X."/>
            <person name="Oztas S."/>
            <person name="Petit M.A."/>
            <person name="Pichon C."/>
            <person name="Rouy Z."/>
            <person name="Ruf C.S."/>
            <person name="Schneider D."/>
            <person name="Tourret J."/>
            <person name="Vacherie B."/>
            <person name="Vallenet D."/>
            <person name="Medigue C."/>
            <person name="Rocha E.P.C."/>
            <person name="Denamur E."/>
        </authorList>
    </citation>
    <scope>NUCLEOTIDE SEQUENCE [LARGE SCALE GENOMIC DNA]</scope>
    <source>
        <strain>55989 / EAEC</strain>
    </source>
</reference>
<organism>
    <name type="scientific">Escherichia coli (strain 55989 / EAEC)</name>
    <dbReference type="NCBI Taxonomy" id="585055"/>
    <lineage>
        <taxon>Bacteria</taxon>
        <taxon>Pseudomonadati</taxon>
        <taxon>Pseudomonadota</taxon>
        <taxon>Gammaproteobacteria</taxon>
        <taxon>Enterobacterales</taxon>
        <taxon>Enterobacteriaceae</taxon>
        <taxon>Escherichia</taxon>
    </lineage>
</organism>
<feature type="chain" id="PRO_1000195921" description="Large ribosomal subunit protein bL28">
    <location>
        <begin position="1"/>
        <end position="78"/>
    </location>
</feature>
<gene>
    <name evidence="1" type="primary">rpmB</name>
    <name type="ordered locus">EC55989_4101</name>
</gene>
<evidence type="ECO:0000255" key="1">
    <source>
        <dbReference type="HAMAP-Rule" id="MF_00373"/>
    </source>
</evidence>
<evidence type="ECO:0000305" key="2"/>
<keyword id="KW-1185">Reference proteome</keyword>
<keyword id="KW-0687">Ribonucleoprotein</keyword>
<keyword id="KW-0689">Ribosomal protein</keyword>
<dbReference type="EMBL" id="CU928145">
    <property type="protein sequence ID" value="CAV00641.1"/>
    <property type="molecule type" value="Genomic_DNA"/>
</dbReference>
<dbReference type="RefSeq" id="WP_000091955.1">
    <property type="nucleotide sequence ID" value="NZ_CP028304.1"/>
</dbReference>
<dbReference type="SMR" id="B7L760"/>
<dbReference type="GeneID" id="93778350"/>
<dbReference type="KEGG" id="eck:EC55989_4101"/>
<dbReference type="HOGENOM" id="CLU_064548_3_1_6"/>
<dbReference type="Proteomes" id="UP000000746">
    <property type="component" value="Chromosome"/>
</dbReference>
<dbReference type="GO" id="GO:0022625">
    <property type="term" value="C:cytosolic large ribosomal subunit"/>
    <property type="evidence" value="ECO:0007669"/>
    <property type="project" value="TreeGrafter"/>
</dbReference>
<dbReference type="GO" id="GO:0003735">
    <property type="term" value="F:structural constituent of ribosome"/>
    <property type="evidence" value="ECO:0007669"/>
    <property type="project" value="InterPro"/>
</dbReference>
<dbReference type="GO" id="GO:0006412">
    <property type="term" value="P:translation"/>
    <property type="evidence" value="ECO:0007669"/>
    <property type="project" value="UniProtKB-UniRule"/>
</dbReference>
<dbReference type="FunFam" id="2.30.170.40:FF:000001">
    <property type="entry name" value="50S ribosomal protein L28"/>
    <property type="match status" value="1"/>
</dbReference>
<dbReference type="Gene3D" id="2.30.170.40">
    <property type="entry name" value="Ribosomal protein L28/L24"/>
    <property type="match status" value="1"/>
</dbReference>
<dbReference type="HAMAP" id="MF_00373">
    <property type="entry name" value="Ribosomal_bL28"/>
    <property type="match status" value="1"/>
</dbReference>
<dbReference type="InterPro" id="IPR026569">
    <property type="entry name" value="Ribosomal_bL28"/>
</dbReference>
<dbReference type="InterPro" id="IPR034704">
    <property type="entry name" value="Ribosomal_bL28/bL31-like_sf"/>
</dbReference>
<dbReference type="InterPro" id="IPR001383">
    <property type="entry name" value="Ribosomal_bL28_bact-type"/>
</dbReference>
<dbReference type="InterPro" id="IPR037147">
    <property type="entry name" value="Ribosomal_bL28_sf"/>
</dbReference>
<dbReference type="NCBIfam" id="TIGR00009">
    <property type="entry name" value="L28"/>
    <property type="match status" value="1"/>
</dbReference>
<dbReference type="PANTHER" id="PTHR13528">
    <property type="entry name" value="39S RIBOSOMAL PROTEIN L28, MITOCHONDRIAL"/>
    <property type="match status" value="1"/>
</dbReference>
<dbReference type="PANTHER" id="PTHR13528:SF2">
    <property type="entry name" value="LARGE RIBOSOMAL SUBUNIT PROTEIN BL28M"/>
    <property type="match status" value="1"/>
</dbReference>
<dbReference type="Pfam" id="PF00830">
    <property type="entry name" value="Ribosomal_L28"/>
    <property type="match status" value="1"/>
</dbReference>
<dbReference type="SUPFAM" id="SSF143800">
    <property type="entry name" value="L28p-like"/>
    <property type="match status" value="1"/>
</dbReference>
<name>RL28_ECO55</name>
<accession>B7L760</accession>
<comment type="similarity">
    <text evidence="1">Belongs to the bacterial ribosomal protein bL28 family.</text>
</comment>
<sequence>MSRVCQVTGKRPVTGNNRSHALNATKRRFLPNLHSHRFWVESEKRFVTLRVSAKGMRVIDKKGIDTVLAELRARGEKY</sequence>